<feature type="chain" id="PRO_0000448602" description="Antitoxin Xre">
    <location>
        <begin position="1"/>
        <end position="159"/>
    </location>
</feature>
<feature type="helix" evidence="6">
    <location>
        <begin position="12"/>
        <end position="15"/>
    </location>
</feature>
<feature type="helix" evidence="6">
    <location>
        <begin position="17"/>
        <end position="32"/>
    </location>
</feature>
<feature type="helix" evidence="6">
    <location>
        <begin position="40"/>
        <end position="49"/>
    </location>
</feature>
<feature type="helix" evidence="6">
    <location>
        <begin position="53"/>
        <end position="61"/>
    </location>
</feature>
<feature type="helix" evidence="6">
    <location>
        <begin position="67"/>
        <end position="73"/>
    </location>
</feature>
<feature type="helix" evidence="6">
    <location>
        <begin position="76"/>
        <end position="84"/>
    </location>
</feature>
<feature type="helix" evidence="6">
    <location>
        <begin position="91"/>
        <end position="111"/>
    </location>
</feature>
<feature type="helix" evidence="6">
    <location>
        <begin position="114"/>
        <end position="121"/>
    </location>
</feature>
<feature type="turn" evidence="6">
    <location>
        <begin position="126"/>
        <end position="130"/>
    </location>
</feature>
<feature type="helix" evidence="6">
    <location>
        <begin position="134"/>
        <end position="138"/>
    </location>
</feature>
<feature type="helix" evidence="6">
    <location>
        <begin position="140"/>
        <end position="155"/>
    </location>
</feature>
<sequence length="159" mass="18026">MSANAEKEHAMLAEVLRDNGYHEYRARLQALLDIPELASDFEIHTRITDGFAATWLVKLTERGVLTPVERDQIIPLRTLKSRIERDQPLTVDESDRLFRSAHITAMAEAVFGEAGKAKRWLSKPKERFSGLTPMQMLTTQQGTTQVEEMLLQIAEGYGL</sequence>
<protein>
    <recommendedName>
        <fullName evidence="2">Antitoxin Xre</fullName>
    </recommendedName>
</protein>
<keyword id="KW-0002">3D-structure</keyword>
<keyword id="KW-0238">DNA-binding</keyword>
<keyword id="KW-1185">Reference proteome</keyword>
<keyword id="KW-1277">Toxin-antitoxin system</keyword>
<accession>Q88K58</accession>
<evidence type="ECO:0000269" key="1">
    <source>
    </source>
</evidence>
<evidence type="ECO:0000303" key="2">
    <source>
    </source>
</evidence>
<evidence type="ECO:0000305" key="3"/>
<evidence type="ECO:0000305" key="4">
    <source>
    </source>
</evidence>
<evidence type="ECO:0007744" key="5">
    <source>
        <dbReference type="PDB" id="6GW6"/>
    </source>
</evidence>
<evidence type="ECO:0007829" key="6">
    <source>
        <dbReference type="PDB" id="6GW6"/>
    </source>
</evidence>
<proteinExistence type="evidence at protein level"/>
<organism>
    <name type="scientific">Pseudomonas putida (strain ATCC 47054 / DSM 6125 / CFBP 8728 / NCIMB 11950 / KT2440)</name>
    <dbReference type="NCBI Taxonomy" id="160488"/>
    <lineage>
        <taxon>Bacteria</taxon>
        <taxon>Pseudomonadati</taxon>
        <taxon>Pseudomonadota</taxon>
        <taxon>Gammaproteobacteria</taxon>
        <taxon>Pseudomonadales</taxon>
        <taxon>Pseudomonadaceae</taxon>
        <taxon>Pseudomonas</taxon>
    </lineage>
</organism>
<comment type="function">
    <text evidence="4">Probable antitoxin component of a type II toxin-antitoxin (TA) system. In vivo probably neutralizes the toxic effect of cognate toxin Res.</text>
</comment>
<comment type="subunit">
    <text evidence="1">Homodimer. Forms a complex with cognate toxin Res; the 2 toxin molecules dimerize and each contacts an Xre homodimer. Most Res-Xre contacts are between the antitoxin molecule closest to the toxin.</text>
</comment>
<comment type="domain">
    <text evidence="1 4">The homodimer can be superposed on the Cro helix-turn-helix binding domain, suggesting it probably binds DNA and can act as a transcription factor as is often the case with antitoxins in type II TA systems (Probable). The C-terminus of the antitoxin inserts into the putative NAD(+)-binding site of toxin Res, blocking access to the active site (PubMed:30315706).</text>
</comment>
<comment type="similarity">
    <text evidence="3">Belongs to the MbcA/ParS/Xre antitoxin family.</text>
</comment>
<reference key="1">
    <citation type="journal article" date="2002" name="Environ. Microbiol.">
        <title>Complete genome sequence and comparative analysis of the metabolically versatile Pseudomonas putida KT2440.</title>
        <authorList>
            <person name="Nelson K.E."/>
            <person name="Weinel C."/>
            <person name="Paulsen I.T."/>
            <person name="Dodson R.J."/>
            <person name="Hilbert H."/>
            <person name="Martins dos Santos V.A.P."/>
            <person name="Fouts D.E."/>
            <person name="Gill S.R."/>
            <person name="Pop M."/>
            <person name="Holmes M."/>
            <person name="Brinkac L.M."/>
            <person name="Beanan M.J."/>
            <person name="DeBoy R.T."/>
            <person name="Daugherty S.C."/>
            <person name="Kolonay J.F."/>
            <person name="Madupu R."/>
            <person name="Nelson W.C."/>
            <person name="White O."/>
            <person name="Peterson J.D."/>
            <person name="Khouri H.M."/>
            <person name="Hance I."/>
            <person name="Chris Lee P."/>
            <person name="Holtzapple E.K."/>
            <person name="Scanlan D."/>
            <person name="Tran K."/>
            <person name="Moazzez A."/>
            <person name="Utterback T.R."/>
            <person name="Rizzo M."/>
            <person name="Lee K."/>
            <person name="Kosack D."/>
            <person name="Moestl D."/>
            <person name="Wedler H."/>
            <person name="Lauber J."/>
            <person name="Stjepandic D."/>
            <person name="Hoheisel J."/>
            <person name="Straetz M."/>
            <person name="Heim S."/>
            <person name="Kiewitz C."/>
            <person name="Eisen J.A."/>
            <person name="Timmis K.N."/>
            <person name="Duesterhoeft A."/>
            <person name="Tuemmler B."/>
            <person name="Fraser C.M."/>
        </authorList>
    </citation>
    <scope>NUCLEOTIDE SEQUENCE [LARGE SCALE GENOMIC DNA]</scope>
    <source>
        <strain>ATCC 47054 / DSM 6125 / CFBP 8728 / NCIMB 11950 / KT2440</strain>
    </source>
</reference>
<reference evidence="5" key="2">
    <citation type="journal article" date="2019" name="Mol. Microbiol.">
        <title>The RES domain toxins of RES-Xre toxin-antitoxin modules induce cell stasis by degrading NAD+.</title>
        <authorList>
            <person name="Skjerning R.B."/>
            <person name="Senissar M."/>
            <person name="Winther K.S."/>
            <person name="Gerdes K."/>
            <person name="Brodersen D.E."/>
        </authorList>
    </citation>
    <scope>X-RAY CRYSTALLOGRAPHY (2.21 ANGSTROMS) OF 11-159 IN COMPLEX WITH TOXIN</scope>
    <scope>PROBABLE FUNCTION AS AN ANTITOXIN</scope>
    <scope>SUBUNIT</scope>
    <scope>DOMAIN</scope>
    <scope>PROBABLE DNA-BINDING</scope>
    <source>
        <strain>ATCC 47054 / DSM 6125 / CFBP 8728 / NCIMB 11950 / KT2440</strain>
    </source>
</reference>
<dbReference type="EMBL" id="AE015451">
    <property type="protein sequence ID" value="AAN68045.1"/>
    <property type="molecule type" value="Genomic_DNA"/>
</dbReference>
<dbReference type="RefSeq" id="NP_744581.1">
    <property type="nucleotide sequence ID" value="NC_002947.4"/>
</dbReference>
<dbReference type="PDB" id="6GW6">
    <property type="method" value="X-ray"/>
    <property type="resolution" value="2.21 A"/>
    <property type="chains" value="B/C/E/F=11-159"/>
</dbReference>
<dbReference type="PDBsum" id="6GW6"/>
<dbReference type="SMR" id="Q88K58"/>
<dbReference type="STRING" id="160488.PP_2433"/>
<dbReference type="PaxDb" id="160488-PP_2433"/>
<dbReference type="KEGG" id="ppu:PP_2433"/>
<dbReference type="PATRIC" id="fig|160488.4.peg.2578"/>
<dbReference type="eggNOG" id="COG5642">
    <property type="taxonomic scope" value="Bacteria"/>
</dbReference>
<dbReference type="HOGENOM" id="CLU_109353_5_0_6"/>
<dbReference type="OrthoDB" id="8595277at2"/>
<dbReference type="PhylomeDB" id="Q88K58"/>
<dbReference type="BioCyc" id="PPUT160488:G1G01-2598-MONOMER"/>
<dbReference type="Proteomes" id="UP000000556">
    <property type="component" value="Chromosome"/>
</dbReference>
<dbReference type="GO" id="GO:0003677">
    <property type="term" value="F:DNA binding"/>
    <property type="evidence" value="ECO:0007669"/>
    <property type="project" value="UniProtKB-KW"/>
</dbReference>
<dbReference type="InterPro" id="IPR011979">
    <property type="entry name" value="Antitox_Xre"/>
</dbReference>
<dbReference type="InterPro" id="IPR046847">
    <property type="entry name" value="Xre-like_HTH"/>
</dbReference>
<dbReference type="InterPro" id="IPR024467">
    <property type="entry name" value="Xre/MbcA/ParS-like_toxin-bd"/>
</dbReference>
<dbReference type="NCBIfam" id="TIGR02293">
    <property type="entry name" value="TAS_TIGR02293"/>
    <property type="match status" value="1"/>
</dbReference>
<dbReference type="Pfam" id="PF20432">
    <property type="entry name" value="Xre-like-HTH"/>
    <property type="match status" value="1"/>
</dbReference>
<dbReference type="Pfam" id="PF09722">
    <property type="entry name" value="Xre_MbcA_ParS_C"/>
    <property type="match status" value="1"/>
</dbReference>
<gene>
    <name evidence="2" type="primary">xre</name>
    <name type="ordered locus">PP_2433</name>
</gene>
<name>XRE_PSEPK</name>